<accession>A4WEI2</accession>
<proteinExistence type="inferred from homology"/>
<feature type="chain" id="PRO_1000058380" description="3,4-dihydroxy-2-butanone 4-phosphate synthase">
    <location>
        <begin position="1"/>
        <end position="217"/>
    </location>
</feature>
<feature type="binding site" evidence="1">
    <location>
        <begin position="37"/>
        <end position="38"/>
    </location>
    <ligand>
        <name>D-ribulose 5-phosphate</name>
        <dbReference type="ChEBI" id="CHEBI:58121"/>
    </ligand>
</feature>
<feature type="binding site" evidence="1">
    <location>
        <position position="38"/>
    </location>
    <ligand>
        <name>Mg(2+)</name>
        <dbReference type="ChEBI" id="CHEBI:18420"/>
        <label>1</label>
    </ligand>
</feature>
<feature type="binding site" evidence="1">
    <location>
        <position position="38"/>
    </location>
    <ligand>
        <name>Mg(2+)</name>
        <dbReference type="ChEBI" id="CHEBI:18420"/>
        <label>2</label>
    </ligand>
</feature>
<feature type="binding site" evidence="1">
    <location>
        <position position="42"/>
    </location>
    <ligand>
        <name>D-ribulose 5-phosphate</name>
        <dbReference type="ChEBI" id="CHEBI:58121"/>
    </ligand>
</feature>
<feature type="binding site" evidence="1">
    <location>
        <begin position="150"/>
        <end position="154"/>
    </location>
    <ligand>
        <name>D-ribulose 5-phosphate</name>
        <dbReference type="ChEBI" id="CHEBI:58121"/>
    </ligand>
</feature>
<feature type="binding site" evidence="1">
    <location>
        <position position="153"/>
    </location>
    <ligand>
        <name>Mg(2+)</name>
        <dbReference type="ChEBI" id="CHEBI:18420"/>
        <label>2</label>
    </ligand>
</feature>
<feature type="binding site" evidence="1">
    <location>
        <position position="174"/>
    </location>
    <ligand>
        <name>D-ribulose 5-phosphate</name>
        <dbReference type="ChEBI" id="CHEBI:58121"/>
    </ligand>
</feature>
<feature type="site" description="Essential for catalytic activity" evidence="1">
    <location>
        <position position="136"/>
    </location>
</feature>
<feature type="site" description="Essential for catalytic activity" evidence="1">
    <location>
        <position position="174"/>
    </location>
</feature>
<reference key="1">
    <citation type="journal article" date="2010" name="PLoS Genet.">
        <title>Genome sequence of the plant growth promoting endophytic bacterium Enterobacter sp. 638.</title>
        <authorList>
            <person name="Taghavi S."/>
            <person name="van der Lelie D."/>
            <person name="Hoffman A."/>
            <person name="Zhang Y.B."/>
            <person name="Walla M.D."/>
            <person name="Vangronsveld J."/>
            <person name="Newman L."/>
            <person name="Monchy S."/>
        </authorList>
    </citation>
    <scope>NUCLEOTIDE SEQUENCE [LARGE SCALE GENOMIC DNA]</scope>
    <source>
        <strain>638</strain>
    </source>
</reference>
<protein>
    <recommendedName>
        <fullName evidence="1">3,4-dihydroxy-2-butanone 4-phosphate synthase</fullName>
        <shortName evidence="1">DHBP synthase</shortName>
        <ecNumber evidence="1">4.1.99.12</ecNumber>
    </recommendedName>
</protein>
<dbReference type="EC" id="4.1.99.12" evidence="1"/>
<dbReference type="EMBL" id="CP000653">
    <property type="protein sequence ID" value="ABP62112.1"/>
    <property type="molecule type" value="Genomic_DNA"/>
</dbReference>
<dbReference type="RefSeq" id="WP_015960440.1">
    <property type="nucleotide sequence ID" value="NC_009436.1"/>
</dbReference>
<dbReference type="SMR" id="A4WEI2"/>
<dbReference type="STRING" id="399742.Ent638_3453"/>
<dbReference type="KEGG" id="ent:Ent638_3453"/>
<dbReference type="eggNOG" id="COG0108">
    <property type="taxonomic scope" value="Bacteria"/>
</dbReference>
<dbReference type="HOGENOM" id="CLU_020273_3_0_6"/>
<dbReference type="OrthoDB" id="9793111at2"/>
<dbReference type="UniPathway" id="UPA00275">
    <property type="reaction ID" value="UER00399"/>
</dbReference>
<dbReference type="Proteomes" id="UP000000230">
    <property type="component" value="Chromosome"/>
</dbReference>
<dbReference type="GO" id="GO:0005829">
    <property type="term" value="C:cytosol"/>
    <property type="evidence" value="ECO:0007669"/>
    <property type="project" value="TreeGrafter"/>
</dbReference>
<dbReference type="GO" id="GO:0008686">
    <property type="term" value="F:3,4-dihydroxy-2-butanone-4-phosphate synthase activity"/>
    <property type="evidence" value="ECO:0007669"/>
    <property type="project" value="UniProtKB-UniRule"/>
</dbReference>
<dbReference type="GO" id="GO:0000287">
    <property type="term" value="F:magnesium ion binding"/>
    <property type="evidence" value="ECO:0007669"/>
    <property type="project" value="UniProtKB-UniRule"/>
</dbReference>
<dbReference type="GO" id="GO:0030145">
    <property type="term" value="F:manganese ion binding"/>
    <property type="evidence" value="ECO:0007669"/>
    <property type="project" value="UniProtKB-UniRule"/>
</dbReference>
<dbReference type="GO" id="GO:0009231">
    <property type="term" value="P:riboflavin biosynthetic process"/>
    <property type="evidence" value="ECO:0007669"/>
    <property type="project" value="UniProtKB-UniRule"/>
</dbReference>
<dbReference type="FunFam" id="3.90.870.10:FF:000002">
    <property type="entry name" value="3,4-dihydroxy-2-butanone 4-phosphate synthase"/>
    <property type="match status" value="1"/>
</dbReference>
<dbReference type="Gene3D" id="3.90.870.10">
    <property type="entry name" value="DHBP synthase"/>
    <property type="match status" value="1"/>
</dbReference>
<dbReference type="HAMAP" id="MF_00180">
    <property type="entry name" value="RibB"/>
    <property type="match status" value="1"/>
</dbReference>
<dbReference type="InterPro" id="IPR017945">
    <property type="entry name" value="DHBP_synth_RibB-like_a/b_dom"/>
</dbReference>
<dbReference type="InterPro" id="IPR000422">
    <property type="entry name" value="DHBP_synthase_RibB"/>
</dbReference>
<dbReference type="NCBIfam" id="TIGR00506">
    <property type="entry name" value="ribB"/>
    <property type="match status" value="1"/>
</dbReference>
<dbReference type="PANTHER" id="PTHR21327:SF38">
    <property type="entry name" value="3,4-DIHYDROXY-2-BUTANONE 4-PHOSPHATE SYNTHASE"/>
    <property type="match status" value="1"/>
</dbReference>
<dbReference type="PANTHER" id="PTHR21327">
    <property type="entry name" value="GTP CYCLOHYDROLASE II-RELATED"/>
    <property type="match status" value="1"/>
</dbReference>
<dbReference type="Pfam" id="PF00926">
    <property type="entry name" value="DHBP_synthase"/>
    <property type="match status" value="1"/>
</dbReference>
<dbReference type="SUPFAM" id="SSF55821">
    <property type="entry name" value="YrdC/RibB"/>
    <property type="match status" value="1"/>
</dbReference>
<comment type="function">
    <text evidence="1">Catalyzes the conversion of D-ribulose 5-phosphate to formate and 3,4-dihydroxy-2-butanone 4-phosphate.</text>
</comment>
<comment type="catalytic activity">
    <reaction evidence="1">
        <text>D-ribulose 5-phosphate = (2S)-2-hydroxy-3-oxobutyl phosphate + formate + H(+)</text>
        <dbReference type="Rhea" id="RHEA:18457"/>
        <dbReference type="ChEBI" id="CHEBI:15378"/>
        <dbReference type="ChEBI" id="CHEBI:15740"/>
        <dbReference type="ChEBI" id="CHEBI:58121"/>
        <dbReference type="ChEBI" id="CHEBI:58830"/>
        <dbReference type="EC" id="4.1.99.12"/>
    </reaction>
</comment>
<comment type="cofactor">
    <cofactor evidence="1">
        <name>Mg(2+)</name>
        <dbReference type="ChEBI" id="CHEBI:18420"/>
    </cofactor>
    <cofactor evidence="1">
        <name>Mn(2+)</name>
        <dbReference type="ChEBI" id="CHEBI:29035"/>
    </cofactor>
    <text evidence="1">Binds 2 divalent metal cations per subunit. Magnesium or manganese.</text>
</comment>
<comment type="pathway">
    <text evidence="1">Cofactor biosynthesis; riboflavin biosynthesis; 2-hydroxy-3-oxobutyl phosphate from D-ribulose 5-phosphate: step 1/1.</text>
</comment>
<comment type="subunit">
    <text evidence="1">Homodimer.</text>
</comment>
<comment type="similarity">
    <text evidence="1">Belongs to the DHBP synthase family.</text>
</comment>
<organism>
    <name type="scientific">Enterobacter sp. (strain 638)</name>
    <dbReference type="NCBI Taxonomy" id="399742"/>
    <lineage>
        <taxon>Bacteria</taxon>
        <taxon>Pseudomonadati</taxon>
        <taxon>Pseudomonadota</taxon>
        <taxon>Gammaproteobacteria</taxon>
        <taxon>Enterobacterales</taxon>
        <taxon>Enterobacteriaceae</taxon>
        <taxon>Enterobacter</taxon>
    </lineage>
</organism>
<name>RIBB_ENT38</name>
<keyword id="KW-0456">Lyase</keyword>
<keyword id="KW-0460">Magnesium</keyword>
<keyword id="KW-0464">Manganese</keyword>
<keyword id="KW-0479">Metal-binding</keyword>
<keyword id="KW-0686">Riboflavin biosynthesis</keyword>
<evidence type="ECO:0000255" key="1">
    <source>
        <dbReference type="HAMAP-Rule" id="MF_00180"/>
    </source>
</evidence>
<gene>
    <name evidence="1" type="primary">ribB</name>
    <name type="ordered locus">Ent638_3453</name>
</gene>
<sequence length="217" mass="23451">MNQTLLSSFGTSIERVEHALDALREGRGVMVLDDEHRENEGDMIFAAENMTVEQMALTIRHGSGIVCLCINEERRKQLDLPMMVENNTSAFGTGFTVTIEAAHGVTTGVSAADRLTTVRAAIADGAKPSDLHRPGHVFPLRAQAGGVLTRGGHTEATLDLVTLAGFKPAGVLCELTNDDGTMARAPECVTFARLHNMPVVTIEDLVEYRQAHERKAS</sequence>